<sequence length="227" mass="25205">MTDIAMLPESWREVLGGELQQPYFKELMEFVEEERANGPVYPPREEVFAALDATPFDRVKVLVLGQDPYHGEGQGHGLCFSVRPGVKVPPSLRNIYKEMHAELDTPIPDNGYLMPWAEQGVLLLNAVLTVRAGEANSHKSRGWELFTDAVIRAVAARTDPAVFVLWGNYAQKKLPLIDEARHVVVKGAHPSPLSAKKFFGSRPFTQINEAVAGQGHEPIDWTIPNLG</sequence>
<organism>
    <name type="scientific">Streptomyces coelicolor (strain ATCC BAA-471 / A3(2) / M145)</name>
    <dbReference type="NCBI Taxonomy" id="100226"/>
    <lineage>
        <taxon>Bacteria</taxon>
        <taxon>Bacillati</taxon>
        <taxon>Actinomycetota</taxon>
        <taxon>Actinomycetes</taxon>
        <taxon>Kitasatosporales</taxon>
        <taxon>Streptomycetaceae</taxon>
        <taxon>Streptomyces</taxon>
        <taxon>Streptomyces albidoflavus group</taxon>
    </lineage>
</organism>
<protein>
    <recommendedName>
        <fullName>Uracil-DNA glycosylase 2</fullName>
        <shortName>UDG 2</shortName>
        <ecNumber>3.2.2.27</ecNumber>
    </recommendedName>
</protein>
<evidence type="ECO:0000250" key="1"/>
<evidence type="ECO:0000305" key="2"/>
<comment type="function">
    <text evidence="1">Excises uracil residues from the DNA which can arise as a result of misincorporation of dUMP residues by DNA polymerase or due to deamination of cytosine.</text>
</comment>
<comment type="catalytic activity">
    <reaction>
        <text>Hydrolyzes single-stranded DNA or mismatched double-stranded DNA and polynucleotides, releasing free uracil.</text>
        <dbReference type="EC" id="3.2.2.27"/>
    </reaction>
</comment>
<comment type="subcellular location">
    <subcellularLocation>
        <location evidence="1">Cytoplasm</location>
    </subcellularLocation>
</comment>
<comment type="similarity">
    <text evidence="2">Belongs to the uracil-DNA glycosylase (UDG) superfamily. UNG family.</text>
</comment>
<reference key="1">
    <citation type="journal article" date="2002" name="Nature">
        <title>Complete genome sequence of the model actinomycete Streptomyces coelicolor A3(2).</title>
        <authorList>
            <person name="Bentley S.D."/>
            <person name="Chater K.F."/>
            <person name="Cerdeno-Tarraga A.-M."/>
            <person name="Challis G.L."/>
            <person name="Thomson N.R."/>
            <person name="James K.D."/>
            <person name="Harris D.E."/>
            <person name="Quail M.A."/>
            <person name="Kieser H."/>
            <person name="Harper D."/>
            <person name="Bateman A."/>
            <person name="Brown S."/>
            <person name="Chandra G."/>
            <person name="Chen C.W."/>
            <person name="Collins M."/>
            <person name="Cronin A."/>
            <person name="Fraser A."/>
            <person name="Goble A."/>
            <person name="Hidalgo J."/>
            <person name="Hornsby T."/>
            <person name="Howarth S."/>
            <person name="Huang C.-H."/>
            <person name="Kieser T."/>
            <person name="Larke L."/>
            <person name="Murphy L.D."/>
            <person name="Oliver K."/>
            <person name="O'Neil S."/>
            <person name="Rabbinowitsch E."/>
            <person name="Rajandream M.A."/>
            <person name="Rutherford K.M."/>
            <person name="Rutter S."/>
            <person name="Seeger K."/>
            <person name="Saunders D."/>
            <person name="Sharp S."/>
            <person name="Squares R."/>
            <person name="Squares S."/>
            <person name="Taylor K."/>
            <person name="Warren T."/>
            <person name="Wietzorrek A."/>
            <person name="Woodward J.R."/>
            <person name="Barrell B.G."/>
            <person name="Parkhill J."/>
            <person name="Hopwood D.A."/>
        </authorList>
    </citation>
    <scope>NUCLEOTIDE SEQUENCE [LARGE SCALE GENOMIC DNA]</scope>
    <source>
        <strain>ATCC BAA-471 / A3(2) / M145</strain>
    </source>
</reference>
<accession>Q9K3Z0</accession>
<gene>
    <name type="primary">ung2</name>
    <name type="ordered locus">SCO1343</name>
    <name type="ORF">2SCG61.25c</name>
</gene>
<feature type="chain" id="PRO_0000176150" description="Uracil-DNA glycosylase 2">
    <location>
        <begin position="1"/>
        <end position="227"/>
    </location>
</feature>
<feature type="active site" description="Proton acceptor" evidence="1">
    <location>
        <position position="67"/>
    </location>
</feature>
<name>UNG2_STRCO</name>
<proteinExistence type="inferred from homology"/>
<keyword id="KW-0963">Cytoplasm</keyword>
<keyword id="KW-0227">DNA damage</keyword>
<keyword id="KW-0234">DNA repair</keyword>
<keyword id="KW-0378">Hydrolase</keyword>
<keyword id="KW-1185">Reference proteome</keyword>
<dbReference type="EC" id="3.2.2.27"/>
<dbReference type="EMBL" id="AL939108">
    <property type="protein sequence ID" value="CAB95800.1"/>
    <property type="molecule type" value="Genomic_DNA"/>
</dbReference>
<dbReference type="RefSeq" id="NP_625628.1">
    <property type="nucleotide sequence ID" value="NC_003888.3"/>
</dbReference>
<dbReference type="SMR" id="Q9K3Z0"/>
<dbReference type="STRING" id="100226.gene:17758926"/>
<dbReference type="PaxDb" id="100226-SCO1343"/>
<dbReference type="KEGG" id="sco:SCO1343"/>
<dbReference type="PATRIC" id="fig|100226.15.peg.1350"/>
<dbReference type="eggNOG" id="COG0692">
    <property type="taxonomic scope" value="Bacteria"/>
</dbReference>
<dbReference type="HOGENOM" id="CLU_032162_3_0_11"/>
<dbReference type="InParanoid" id="Q9K3Z0"/>
<dbReference type="OrthoDB" id="9804372at2"/>
<dbReference type="PhylomeDB" id="Q9K3Z0"/>
<dbReference type="Proteomes" id="UP000001973">
    <property type="component" value="Chromosome"/>
</dbReference>
<dbReference type="GO" id="GO:0005737">
    <property type="term" value="C:cytoplasm"/>
    <property type="evidence" value="ECO:0007669"/>
    <property type="project" value="UniProtKB-SubCell"/>
</dbReference>
<dbReference type="GO" id="GO:0004844">
    <property type="term" value="F:uracil DNA N-glycosylase activity"/>
    <property type="evidence" value="ECO:0007669"/>
    <property type="project" value="UniProtKB-UniRule"/>
</dbReference>
<dbReference type="GO" id="GO:0097510">
    <property type="term" value="P:base-excision repair, AP site formation via deaminated base removal"/>
    <property type="evidence" value="ECO:0000318"/>
    <property type="project" value="GO_Central"/>
</dbReference>
<dbReference type="CDD" id="cd10027">
    <property type="entry name" value="UDG-F1-like"/>
    <property type="match status" value="1"/>
</dbReference>
<dbReference type="FunFam" id="3.40.470.10:FF:000001">
    <property type="entry name" value="Uracil-DNA glycosylase"/>
    <property type="match status" value="1"/>
</dbReference>
<dbReference type="Gene3D" id="3.40.470.10">
    <property type="entry name" value="Uracil-DNA glycosylase-like domain"/>
    <property type="match status" value="1"/>
</dbReference>
<dbReference type="HAMAP" id="MF_00148">
    <property type="entry name" value="UDG"/>
    <property type="match status" value="1"/>
</dbReference>
<dbReference type="InterPro" id="IPR002043">
    <property type="entry name" value="UDG_fam1"/>
</dbReference>
<dbReference type="InterPro" id="IPR018085">
    <property type="entry name" value="Ura-DNA_Glyclase_AS"/>
</dbReference>
<dbReference type="InterPro" id="IPR005122">
    <property type="entry name" value="Uracil-DNA_glycosylase-like"/>
</dbReference>
<dbReference type="InterPro" id="IPR036895">
    <property type="entry name" value="Uracil-DNA_glycosylase-like_sf"/>
</dbReference>
<dbReference type="NCBIfam" id="NF003588">
    <property type="entry name" value="PRK05254.1-1"/>
    <property type="match status" value="1"/>
</dbReference>
<dbReference type="NCBIfam" id="NF003589">
    <property type="entry name" value="PRK05254.1-2"/>
    <property type="match status" value="1"/>
</dbReference>
<dbReference type="NCBIfam" id="NF003591">
    <property type="entry name" value="PRK05254.1-4"/>
    <property type="match status" value="1"/>
</dbReference>
<dbReference type="NCBIfam" id="NF003592">
    <property type="entry name" value="PRK05254.1-5"/>
    <property type="match status" value="1"/>
</dbReference>
<dbReference type="NCBIfam" id="TIGR00628">
    <property type="entry name" value="ung"/>
    <property type="match status" value="1"/>
</dbReference>
<dbReference type="PANTHER" id="PTHR11264">
    <property type="entry name" value="URACIL-DNA GLYCOSYLASE"/>
    <property type="match status" value="1"/>
</dbReference>
<dbReference type="PANTHER" id="PTHR11264:SF0">
    <property type="entry name" value="URACIL-DNA GLYCOSYLASE"/>
    <property type="match status" value="1"/>
</dbReference>
<dbReference type="Pfam" id="PF03167">
    <property type="entry name" value="UDG"/>
    <property type="match status" value="1"/>
</dbReference>
<dbReference type="SMART" id="SM00986">
    <property type="entry name" value="UDG"/>
    <property type="match status" value="1"/>
</dbReference>
<dbReference type="SMART" id="SM00987">
    <property type="entry name" value="UreE_C"/>
    <property type="match status" value="1"/>
</dbReference>
<dbReference type="SUPFAM" id="SSF52141">
    <property type="entry name" value="Uracil-DNA glycosylase-like"/>
    <property type="match status" value="1"/>
</dbReference>
<dbReference type="PROSITE" id="PS00130">
    <property type="entry name" value="U_DNA_GLYCOSYLASE"/>
    <property type="match status" value="1"/>
</dbReference>